<reference key="1">
    <citation type="journal article" date="2004" name="J. Infect. Dis.">
        <title>Progress toward characterization of the group A Streptococcus metagenome: complete genome sequence of a macrolide-resistant serotype M6 strain.</title>
        <authorList>
            <person name="Banks D.J."/>
            <person name="Porcella S.F."/>
            <person name="Barbian K.D."/>
            <person name="Beres S.B."/>
            <person name="Philips L.E."/>
            <person name="Voyich J.M."/>
            <person name="DeLeo F.R."/>
            <person name="Martin J.M."/>
            <person name="Somerville G.A."/>
            <person name="Musser J.M."/>
        </authorList>
    </citation>
    <scope>NUCLEOTIDE SEQUENCE [LARGE SCALE GENOMIC DNA]</scope>
    <source>
        <strain>ATCC BAA-946 / MGAS10394</strain>
    </source>
</reference>
<accession>Q5XB10</accession>
<protein>
    <recommendedName>
        <fullName evidence="1">Cell division protein SepF</fullName>
    </recommendedName>
</protein>
<organism>
    <name type="scientific">Streptococcus pyogenes serotype M6 (strain ATCC BAA-946 / MGAS10394)</name>
    <dbReference type="NCBI Taxonomy" id="286636"/>
    <lineage>
        <taxon>Bacteria</taxon>
        <taxon>Bacillati</taxon>
        <taxon>Bacillota</taxon>
        <taxon>Bacilli</taxon>
        <taxon>Lactobacillales</taxon>
        <taxon>Streptococcaceae</taxon>
        <taxon>Streptococcus</taxon>
    </lineage>
</organism>
<name>SEPF_STRP6</name>
<keyword id="KW-0131">Cell cycle</keyword>
<keyword id="KW-0132">Cell division</keyword>
<keyword id="KW-0963">Cytoplasm</keyword>
<keyword id="KW-0717">Septation</keyword>
<feature type="chain" id="PRO_0000334108" description="Cell division protein SepF">
    <location>
        <begin position="1"/>
        <end position="218"/>
    </location>
</feature>
<feature type="region of interest" description="Disordered" evidence="2">
    <location>
        <begin position="25"/>
        <end position="115"/>
    </location>
</feature>
<feature type="compositionally biased region" description="Polar residues" evidence="2">
    <location>
        <begin position="29"/>
        <end position="43"/>
    </location>
</feature>
<feature type="compositionally biased region" description="Basic and acidic residues" evidence="2">
    <location>
        <begin position="47"/>
        <end position="63"/>
    </location>
</feature>
<feature type="compositionally biased region" description="Polar residues" evidence="2">
    <location>
        <begin position="102"/>
        <end position="115"/>
    </location>
</feature>
<sequence>MAFKDTFNKMISYFDTDEVNEVEEDVAASTDNVIPRSQQSVRASSHPKQEPRNNHVQQDHQARSQEQTRSQMHPKHGTSERYYQQSQPKEGHEMVDRRKRMSTSSIANRREQYQQSTCSDQTTIALKYPRKYEDAQEIVDLLIVNECVLIDFQFMLDAQARRCLDFIDGASKVLYGSLQKVGSSMYLLAPSNVSVNIEEMTIPHTTQDIGFDFDMKRR</sequence>
<evidence type="ECO:0000255" key="1">
    <source>
        <dbReference type="HAMAP-Rule" id="MF_01197"/>
    </source>
</evidence>
<evidence type="ECO:0000256" key="2">
    <source>
        <dbReference type="SAM" id="MobiDB-lite"/>
    </source>
</evidence>
<evidence type="ECO:0000305" key="3"/>
<proteinExistence type="inferred from homology"/>
<dbReference type="EMBL" id="CP000003">
    <property type="protein sequence ID" value="AAT87403.1"/>
    <property type="status" value="ALT_INIT"/>
    <property type="molecule type" value="Genomic_DNA"/>
</dbReference>
<dbReference type="RefSeq" id="WP_002995878.1">
    <property type="nucleotide sequence ID" value="NC_006086.1"/>
</dbReference>
<dbReference type="SMR" id="Q5XB10"/>
<dbReference type="KEGG" id="spa:M6_Spy1268"/>
<dbReference type="HOGENOM" id="CLU_078499_2_0_9"/>
<dbReference type="Proteomes" id="UP000001167">
    <property type="component" value="Chromosome"/>
</dbReference>
<dbReference type="GO" id="GO:0005737">
    <property type="term" value="C:cytoplasm"/>
    <property type="evidence" value="ECO:0007669"/>
    <property type="project" value="UniProtKB-SubCell"/>
</dbReference>
<dbReference type="GO" id="GO:0000917">
    <property type="term" value="P:division septum assembly"/>
    <property type="evidence" value="ECO:0007669"/>
    <property type="project" value="UniProtKB-KW"/>
</dbReference>
<dbReference type="GO" id="GO:0043093">
    <property type="term" value="P:FtsZ-dependent cytokinesis"/>
    <property type="evidence" value="ECO:0007669"/>
    <property type="project" value="UniProtKB-UniRule"/>
</dbReference>
<dbReference type="Gene3D" id="3.30.110.150">
    <property type="entry name" value="SepF-like protein"/>
    <property type="match status" value="1"/>
</dbReference>
<dbReference type="HAMAP" id="MF_01197">
    <property type="entry name" value="SepF"/>
    <property type="match status" value="1"/>
</dbReference>
<dbReference type="InterPro" id="IPR023052">
    <property type="entry name" value="Cell_div_SepF"/>
</dbReference>
<dbReference type="InterPro" id="IPR007561">
    <property type="entry name" value="Cell_div_SepF/SepF-rel"/>
</dbReference>
<dbReference type="InterPro" id="IPR038594">
    <property type="entry name" value="SepF-like_sf"/>
</dbReference>
<dbReference type="PANTHER" id="PTHR35798">
    <property type="entry name" value="CELL DIVISION PROTEIN SEPF"/>
    <property type="match status" value="1"/>
</dbReference>
<dbReference type="PANTHER" id="PTHR35798:SF1">
    <property type="entry name" value="CELL DIVISION PROTEIN SEPF"/>
    <property type="match status" value="1"/>
</dbReference>
<dbReference type="Pfam" id="PF04472">
    <property type="entry name" value="SepF"/>
    <property type="match status" value="1"/>
</dbReference>
<comment type="function">
    <text evidence="1">Cell division protein that is part of the divisome complex and is recruited early to the Z-ring. Probably stimulates Z-ring formation, perhaps through the cross-linking of FtsZ protofilaments. Its function overlaps with FtsA.</text>
</comment>
<comment type="subunit">
    <text evidence="1">Homodimer. Interacts with FtsZ.</text>
</comment>
<comment type="subcellular location">
    <subcellularLocation>
        <location evidence="1">Cytoplasm</location>
    </subcellularLocation>
    <text evidence="1">Localizes to the division site, in a FtsZ-dependent manner.</text>
</comment>
<comment type="similarity">
    <text evidence="1">Belongs to the SepF family.</text>
</comment>
<comment type="sequence caution" evidence="3">
    <conflict type="erroneous initiation">
        <sequence resource="EMBL-CDS" id="AAT87403"/>
    </conflict>
</comment>
<gene>
    <name evidence="1" type="primary">sepF</name>
    <name type="ordered locus">M6_Spy1268</name>
</gene>